<gene>
    <name evidence="1" type="primary">rplD</name>
    <name evidence="1" type="synonym">rpl4</name>
    <name type="ordered locus">CYB_2598</name>
</gene>
<accession>Q2JIM6</accession>
<keyword id="KW-1185">Reference proteome</keyword>
<keyword id="KW-0687">Ribonucleoprotein</keyword>
<keyword id="KW-0689">Ribosomal protein</keyword>
<keyword id="KW-0694">RNA-binding</keyword>
<keyword id="KW-0699">rRNA-binding</keyword>
<protein>
    <recommendedName>
        <fullName evidence="1">Large ribosomal subunit protein uL4</fullName>
    </recommendedName>
    <alternativeName>
        <fullName>50S ribosomal protein L4</fullName>
    </alternativeName>
</protein>
<feature type="chain" id="PRO_0000242450" description="Large ribosomal subunit protein uL4">
    <location>
        <begin position="1"/>
        <end position="316"/>
    </location>
</feature>
<feature type="region of interest" description="Large ribosomal subunit protein uL4">
    <location>
        <begin position="1"/>
        <end position="211"/>
    </location>
</feature>
<feature type="region of interest" description="Disordered" evidence="2">
    <location>
        <begin position="44"/>
        <end position="76"/>
    </location>
</feature>
<feature type="region of interest" description="Unknown">
    <location>
        <begin position="212"/>
        <end position="316"/>
    </location>
</feature>
<feature type="region of interest" description="Disordered" evidence="2">
    <location>
        <begin position="231"/>
        <end position="316"/>
    </location>
</feature>
<feature type="compositionally biased region" description="Basic residues" evidence="2">
    <location>
        <begin position="60"/>
        <end position="71"/>
    </location>
</feature>
<feature type="compositionally biased region" description="Low complexity" evidence="2">
    <location>
        <begin position="255"/>
        <end position="270"/>
    </location>
</feature>
<feature type="compositionally biased region" description="Acidic residues" evidence="2">
    <location>
        <begin position="281"/>
        <end position="291"/>
    </location>
</feature>
<feature type="compositionally biased region" description="Acidic residues" evidence="2">
    <location>
        <begin position="301"/>
        <end position="316"/>
    </location>
</feature>
<proteinExistence type="inferred from homology"/>
<name>RL4_SYNJB</name>
<dbReference type="EMBL" id="CP000240">
    <property type="protein sequence ID" value="ABD03528.1"/>
    <property type="molecule type" value="Genomic_DNA"/>
</dbReference>
<dbReference type="SMR" id="Q2JIM6"/>
<dbReference type="STRING" id="321332.CYB_2598"/>
<dbReference type="KEGG" id="cyb:CYB_2598"/>
<dbReference type="eggNOG" id="COG0088">
    <property type="taxonomic scope" value="Bacteria"/>
</dbReference>
<dbReference type="HOGENOM" id="CLU_852406_0_0_3"/>
<dbReference type="OrthoDB" id="9803201at2"/>
<dbReference type="Proteomes" id="UP000001938">
    <property type="component" value="Chromosome"/>
</dbReference>
<dbReference type="GO" id="GO:1990904">
    <property type="term" value="C:ribonucleoprotein complex"/>
    <property type="evidence" value="ECO:0007669"/>
    <property type="project" value="UniProtKB-KW"/>
</dbReference>
<dbReference type="GO" id="GO:0005840">
    <property type="term" value="C:ribosome"/>
    <property type="evidence" value="ECO:0007669"/>
    <property type="project" value="UniProtKB-KW"/>
</dbReference>
<dbReference type="GO" id="GO:0019843">
    <property type="term" value="F:rRNA binding"/>
    <property type="evidence" value="ECO:0007669"/>
    <property type="project" value="UniProtKB-UniRule"/>
</dbReference>
<dbReference type="GO" id="GO:0003735">
    <property type="term" value="F:structural constituent of ribosome"/>
    <property type="evidence" value="ECO:0007669"/>
    <property type="project" value="InterPro"/>
</dbReference>
<dbReference type="GO" id="GO:0006412">
    <property type="term" value="P:translation"/>
    <property type="evidence" value="ECO:0007669"/>
    <property type="project" value="UniProtKB-UniRule"/>
</dbReference>
<dbReference type="Gene3D" id="3.40.1370.10">
    <property type="match status" value="1"/>
</dbReference>
<dbReference type="HAMAP" id="MF_01328_B">
    <property type="entry name" value="Ribosomal_uL4_B"/>
    <property type="match status" value="1"/>
</dbReference>
<dbReference type="InterPro" id="IPR002136">
    <property type="entry name" value="Ribosomal_uL4"/>
</dbReference>
<dbReference type="InterPro" id="IPR013005">
    <property type="entry name" value="Ribosomal_uL4-like"/>
</dbReference>
<dbReference type="InterPro" id="IPR023574">
    <property type="entry name" value="Ribosomal_uL4_dom_sf"/>
</dbReference>
<dbReference type="NCBIfam" id="TIGR03953">
    <property type="entry name" value="rplD_bact"/>
    <property type="match status" value="1"/>
</dbReference>
<dbReference type="PANTHER" id="PTHR10746">
    <property type="entry name" value="50S RIBOSOMAL PROTEIN L4"/>
    <property type="match status" value="1"/>
</dbReference>
<dbReference type="PANTHER" id="PTHR10746:SF17">
    <property type="entry name" value="LARGE RIBOSOMAL SUBUNIT PROTEIN UL4C"/>
    <property type="match status" value="1"/>
</dbReference>
<dbReference type="Pfam" id="PF00573">
    <property type="entry name" value="Ribosomal_L4"/>
    <property type="match status" value="1"/>
</dbReference>
<dbReference type="SUPFAM" id="SSF52166">
    <property type="entry name" value="Ribosomal protein L4"/>
    <property type="match status" value="1"/>
</dbReference>
<comment type="function">
    <text evidence="1">One of the primary rRNA binding proteins, this protein initially binds near the 5'-end of the 23S rRNA. It is important during the early stages of 50S assembly. It makes multiple contacts with different domains of the 23S rRNA in the assembled 50S subunit and ribosome.</text>
</comment>
<comment type="function">
    <text evidence="1">Forms part of the polypeptide exit tunnel.</text>
</comment>
<comment type="subunit">
    <text evidence="1">Part of the 50S ribosomal subunit.</text>
</comment>
<comment type="similarity">
    <text evidence="1">Belongs to the universal ribosomal protein uL4 family.</text>
</comment>
<evidence type="ECO:0000255" key="1">
    <source>
        <dbReference type="HAMAP-Rule" id="MF_01328"/>
    </source>
</evidence>
<evidence type="ECO:0000256" key="2">
    <source>
        <dbReference type="SAM" id="MobiDB-lite"/>
    </source>
</evidence>
<reference key="1">
    <citation type="journal article" date="2007" name="ISME J.">
        <title>Population level functional diversity in a microbial community revealed by comparative genomic and metagenomic analyses.</title>
        <authorList>
            <person name="Bhaya D."/>
            <person name="Grossman A.R."/>
            <person name="Steunou A.-S."/>
            <person name="Khuri N."/>
            <person name="Cohan F.M."/>
            <person name="Hamamura N."/>
            <person name="Melendrez M.C."/>
            <person name="Bateson M.M."/>
            <person name="Ward D.M."/>
            <person name="Heidelberg J.F."/>
        </authorList>
    </citation>
    <scope>NUCLEOTIDE SEQUENCE [LARGE SCALE GENOMIC DNA]</scope>
    <source>
        <strain>JA-2-3B'a(2-13)</strain>
    </source>
</reference>
<sequence>MASCVVKNWQGETVGSAELSLKVARPETAAHILYLALRRQMTNARQGNAHTKTRAEVRGGGRKPWKQKGTGRARAGSIRSPLWRKGGVIFGPRKREYNLAMNRKERQLALRTALQSRVEDLIVVEDFQEQLNPPKTRAVAQALLRWGVMEDQSALLIVAERSEAVERAVRNIARVKLIGLDQINVFDLLNVDWVLITVSALEQLKARWGSDAAPAVLETPSEDAPQADIAEDQALPGDGPEDQAVPESEHEEAEQTPAQPEAQENQAALQGRPADPQGPEEQTEEPQDPAEELAQGAEPSTVEEAETAPAEEESDD</sequence>
<organism>
    <name type="scientific">Synechococcus sp. (strain JA-2-3B'a(2-13))</name>
    <name type="common">Cyanobacteria bacterium Yellowstone B-Prime</name>
    <dbReference type="NCBI Taxonomy" id="321332"/>
    <lineage>
        <taxon>Bacteria</taxon>
        <taxon>Bacillati</taxon>
        <taxon>Cyanobacteriota</taxon>
        <taxon>Cyanophyceae</taxon>
        <taxon>Synechococcales</taxon>
        <taxon>Synechococcaceae</taxon>
        <taxon>Synechococcus</taxon>
    </lineage>
</organism>